<evidence type="ECO:0000255" key="1">
    <source>
        <dbReference type="HAMAP-Rule" id="MF_00366"/>
    </source>
</evidence>
<sequence>MMLKPSIDKLLDKVPSRYSLVILQAKRAHELAAGAEPTQEFSSVKYTLQALEEIESGNVIIHPNPEAKRKLARLKVIQARLAAEEEERKIKEQIAKEKEEGDKI</sequence>
<proteinExistence type="inferred from homology"/>
<reference key="1">
    <citation type="journal article" date="2004" name="Nat. Biotechnol.">
        <title>Complete sequence and comparative genome analysis of the dairy bacterium Streptococcus thermophilus.</title>
        <authorList>
            <person name="Bolotin A."/>
            <person name="Quinquis B."/>
            <person name="Renault P."/>
            <person name="Sorokin A."/>
            <person name="Ehrlich S.D."/>
            <person name="Kulakauskas S."/>
            <person name="Lapidus A."/>
            <person name="Goltsman E."/>
            <person name="Mazur M."/>
            <person name="Pusch G.D."/>
            <person name="Fonstein M."/>
            <person name="Overbeek R."/>
            <person name="Kyprides N."/>
            <person name="Purnelle B."/>
            <person name="Prozzi D."/>
            <person name="Ngui K."/>
            <person name="Masuy D."/>
            <person name="Hancy F."/>
            <person name="Burteau S."/>
            <person name="Boutry M."/>
            <person name="Delcour J."/>
            <person name="Goffeau A."/>
            <person name="Hols P."/>
        </authorList>
    </citation>
    <scope>NUCLEOTIDE SEQUENCE [LARGE SCALE GENOMIC DNA]</scope>
    <source>
        <strain>CNRZ 1066</strain>
    </source>
</reference>
<gene>
    <name evidence="1" type="primary">rpoZ</name>
    <name type="ordered locus">str1430</name>
</gene>
<protein>
    <recommendedName>
        <fullName evidence="1">DNA-directed RNA polymerase subunit omega</fullName>
        <shortName evidence="1">RNAP omega subunit</shortName>
        <ecNumber evidence="1">2.7.7.6</ecNumber>
    </recommendedName>
    <alternativeName>
        <fullName evidence="1">RNA polymerase omega subunit</fullName>
    </alternativeName>
    <alternativeName>
        <fullName evidence="1">Transcriptase subunit omega</fullName>
    </alternativeName>
</protein>
<keyword id="KW-0240">DNA-directed RNA polymerase</keyword>
<keyword id="KW-0548">Nucleotidyltransferase</keyword>
<keyword id="KW-0804">Transcription</keyword>
<keyword id="KW-0808">Transferase</keyword>
<dbReference type="EC" id="2.7.7.6" evidence="1"/>
<dbReference type="EMBL" id="CP000024">
    <property type="protein sequence ID" value="AAV62967.1"/>
    <property type="molecule type" value="Genomic_DNA"/>
</dbReference>
<dbReference type="RefSeq" id="WP_002951415.1">
    <property type="nucleotide sequence ID" value="NC_006449.1"/>
</dbReference>
<dbReference type="SMR" id="Q5LYX2"/>
<dbReference type="GeneID" id="66899191"/>
<dbReference type="KEGG" id="stc:str1430"/>
<dbReference type="HOGENOM" id="CLU_125406_0_0_9"/>
<dbReference type="GO" id="GO:0000428">
    <property type="term" value="C:DNA-directed RNA polymerase complex"/>
    <property type="evidence" value="ECO:0007669"/>
    <property type="project" value="UniProtKB-KW"/>
</dbReference>
<dbReference type="GO" id="GO:0003677">
    <property type="term" value="F:DNA binding"/>
    <property type="evidence" value="ECO:0007669"/>
    <property type="project" value="UniProtKB-UniRule"/>
</dbReference>
<dbReference type="GO" id="GO:0003899">
    <property type="term" value="F:DNA-directed RNA polymerase activity"/>
    <property type="evidence" value="ECO:0007669"/>
    <property type="project" value="UniProtKB-UniRule"/>
</dbReference>
<dbReference type="GO" id="GO:0006351">
    <property type="term" value="P:DNA-templated transcription"/>
    <property type="evidence" value="ECO:0007669"/>
    <property type="project" value="UniProtKB-UniRule"/>
</dbReference>
<dbReference type="Gene3D" id="3.90.940.10">
    <property type="match status" value="1"/>
</dbReference>
<dbReference type="HAMAP" id="MF_00366">
    <property type="entry name" value="RNApol_bact_RpoZ"/>
    <property type="match status" value="1"/>
</dbReference>
<dbReference type="InterPro" id="IPR003716">
    <property type="entry name" value="DNA-dir_RNA_pol_omega"/>
</dbReference>
<dbReference type="InterPro" id="IPR006110">
    <property type="entry name" value="Pol_omega/Rpo6/RPB6"/>
</dbReference>
<dbReference type="InterPro" id="IPR036161">
    <property type="entry name" value="RPB6/omega-like_sf"/>
</dbReference>
<dbReference type="NCBIfam" id="TIGR00690">
    <property type="entry name" value="rpoZ"/>
    <property type="match status" value="1"/>
</dbReference>
<dbReference type="PANTHER" id="PTHR34476">
    <property type="entry name" value="DNA-DIRECTED RNA POLYMERASE SUBUNIT OMEGA"/>
    <property type="match status" value="1"/>
</dbReference>
<dbReference type="PANTHER" id="PTHR34476:SF1">
    <property type="entry name" value="DNA-DIRECTED RNA POLYMERASE SUBUNIT OMEGA"/>
    <property type="match status" value="1"/>
</dbReference>
<dbReference type="Pfam" id="PF01192">
    <property type="entry name" value="RNA_pol_Rpb6"/>
    <property type="match status" value="1"/>
</dbReference>
<dbReference type="SMART" id="SM01409">
    <property type="entry name" value="RNA_pol_Rpb6"/>
    <property type="match status" value="1"/>
</dbReference>
<dbReference type="SUPFAM" id="SSF63562">
    <property type="entry name" value="RPB6/omega subunit-like"/>
    <property type="match status" value="1"/>
</dbReference>
<comment type="function">
    <text evidence="1">Promotes RNA polymerase assembly. Latches the N- and C-terminal regions of the beta' subunit thereby facilitating its interaction with the beta and alpha subunits.</text>
</comment>
<comment type="catalytic activity">
    <reaction evidence="1">
        <text>RNA(n) + a ribonucleoside 5'-triphosphate = RNA(n+1) + diphosphate</text>
        <dbReference type="Rhea" id="RHEA:21248"/>
        <dbReference type="Rhea" id="RHEA-COMP:14527"/>
        <dbReference type="Rhea" id="RHEA-COMP:17342"/>
        <dbReference type="ChEBI" id="CHEBI:33019"/>
        <dbReference type="ChEBI" id="CHEBI:61557"/>
        <dbReference type="ChEBI" id="CHEBI:140395"/>
        <dbReference type="EC" id="2.7.7.6"/>
    </reaction>
</comment>
<comment type="subunit">
    <text evidence="1">The RNAP catalytic core consists of 2 alpha, 1 beta, 1 beta' and 1 omega subunit. When a sigma factor is associated with the core the holoenzyme is formed, which can initiate transcription.</text>
</comment>
<comment type="similarity">
    <text evidence="1">Belongs to the RNA polymerase subunit omega family.</text>
</comment>
<accession>Q5LYX2</accession>
<feature type="chain" id="PRO_0000237514" description="DNA-directed RNA polymerase subunit omega">
    <location>
        <begin position="1"/>
        <end position="104"/>
    </location>
</feature>
<name>RPOZ_STRT1</name>
<organism>
    <name type="scientific">Streptococcus thermophilus (strain CNRZ 1066)</name>
    <dbReference type="NCBI Taxonomy" id="299768"/>
    <lineage>
        <taxon>Bacteria</taxon>
        <taxon>Bacillati</taxon>
        <taxon>Bacillota</taxon>
        <taxon>Bacilli</taxon>
        <taxon>Lactobacillales</taxon>
        <taxon>Streptococcaceae</taxon>
        <taxon>Streptococcus</taxon>
    </lineage>
</organism>